<keyword id="KW-0067">ATP-binding</keyword>
<keyword id="KW-0315">Glutamine amidotransferase</keyword>
<keyword id="KW-0332">GMP biosynthesis</keyword>
<keyword id="KW-0436">Ligase</keyword>
<keyword id="KW-0547">Nucleotide-binding</keyword>
<keyword id="KW-0658">Purine biosynthesis</keyword>
<gene>
    <name evidence="1" type="primary">guaA</name>
    <name type="ordered locus">PFLU_5043</name>
</gene>
<proteinExistence type="inferred from homology"/>
<organism>
    <name type="scientific">Pseudomonas fluorescens (strain SBW25)</name>
    <dbReference type="NCBI Taxonomy" id="216595"/>
    <lineage>
        <taxon>Bacteria</taxon>
        <taxon>Pseudomonadati</taxon>
        <taxon>Pseudomonadota</taxon>
        <taxon>Gammaproteobacteria</taxon>
        <taxon>Pseudomonadales</taxon>
        <taxon>Pseudomonadaceae</taxon>
        <taxon>Pseudomonas</taxon>
    </lineage>
</organism>
<accession>C3K1K0</accession>
<protein>
    <recommendedName>
        <fullName evidence="1">GMP synthase [glutamine-hydrolyzing]</fullName>
        <ecNumber evidence="1">6.3.5.2</ecNumber>
    </recommendedName>
    <alternativeName>
        <fullName evidence="1">GMP synthetase</fullName>
    </alternativeName>
    <alternativeName>
        <fullName evidence="1">Glutamine amidotransferase</fullName>
    </alternativeName>
</protein>
<sequence>MALDIHAHRILILDFGSQYTQLIARRVREIGVYCELHPFDMDDEAIREFAPKGVILAGGPESVHEANSPRCPQAVFDLGVPVFGICYGMQTMAEQLGGKVEGSELREFGYARVDVVGKSRLLDGIEDHIDADGLFGLDVWMSHGDKVTKMPEDFHILASTPSCPIAGMFSDERRYYGVQFHPEVTHTKQGGRILSRFILDICECEALWTPSKIAEDAIAQVRAQVGTDNVLLGLSGGVDSSVVAALLHKAIGDQLTCVFVDNGLLRLHEGEQVMAMFAENMGVKVIRANAEDQFLNNLAGESDPEKKRKIIGRTFIDVFDAQSNKLDNIKYLAQGTIYPDVIESAGAKSGKAHVIKSHHNVGGLPEEMNLKLVEPLRELFKDEVRRLGLELGLPYDMVYRHPFPGPGLGVRILGEVKKEYADLLRRADHIFIEELRKADWYHKVSQAFVVFQPVKSVGVVGDGRRYAWVVALRAVETIDFMTARWAHLPYELLETVSGRIINEIEGISRVTYDVSSKPPATIEWE</sequence>
<evidence type="ECO:0000255" key="1">
    <source>
        <dbReference type="HAMAP-Rule" id="MF_00344"/>
    </source>
</evidence>
<dbReference type="EC" id="6.3.5.2" evidence="1"/>
<dbReference type="EMBL" id="AM181176">
    <property type="protein sequence ID" value="CAY52028.1"/>
    <property type="molecule type" value="Genomic_DNA"/>
</dbReference>
<dbReference type="RefSeq" id="WP_015885725.1">
    <property type="nucleotide sequence ID" value="NC_012660.1"/>
</dbReference>
<dbReference type="SMR" id="C3K1K0"/>
<dbReference type="STRING" id="294.SRM1_04632"/>
<dbReference type="MEROPS" id="C26.957"/>
<dbReference type="GeneID" id="93466657"/>
<dbReference type="eggNOG" id="COG0518">
    <property type="taxonomic scope" value="Bacteria"/>
</dbReference>
<dbReference type="eggNOG" id="COG0519">
    <property type="taxonomic scope" value="Bacteria"/>
</dbReference>
<dbReference type="HOGENOM" id="CLU_014340_0_5_6"/>
<dbReference type="OrthoDB" id="9802219at2"/>
<dbReference type="UniPathway" id="UPA00189">
    <property type="reaction ID" value="UER00296"/>
</dbReference>
<dbReference type="GO" id="GO:0005829">
    <property type="term" value="C:cytosol"/>
    <property type="evidence" value="ECO:0007669"/>
    <property type="project" value="TreeGrafter"/>
</dbReference>
<dbReference type="GO" id="GO:0005524">
    <property type="term" value="F:ATP binding"/>
    <property type="evidence" value="ECO:0007669"/>
    <property type="project" value="UniProtKB-UniRule"/>
</dbReference>
<dbReference type="GO" id="GO:0003921">
    <property type="term" value="F:GMP synthase activity"/>
    <property type="evidence" value="ECO:0007669"/>
    <property type="project" value="InterPro"/>
</dbReference>
<dbReference type="CDD" id="cd01742">
    <property type="entry name" value="GATase1_GMP_Synthase"/>
    <property type="match status" value="1"/>
</dbReference>
<dbReference type="CDD" id="cd01997">
    <property type="entry name" value="GMP_synthase_C"/>
    <property type="match status" value="1"/>
</dbReference>
<dbReference type="FunFam" id="3.30.300.10:FF:000002">
    <property type="entry name" value="GMP synthase [glutamine-hydrolyzing]"/>
    <property type="match status" value="1"/>
</dbReference>
<dbReference type="FunFam" id="3.40.50.620:FF:000001">
    <property type="entry name" value="GMP synthase [glutamine-hydrolyzing]"/>
    <property type="match status" value="1"/>
</dbReference>
<dbReference type="FunFam" id="3.40.50.880:FF:000001">
    <property type="entry name" value="GMP synthase [glutamine-hydrolyzing]"/>
    <property type="match status" value="1"/>
</dbReference>
<dbReference type="Gene3D" id="3.30.300.10">
    <property type="match status" value="1"/>
</dbReference>
<dbReference type="Gene3D" id="3.40.50.880">
    <property type="match status" value="1"/>
</dbReference>
<dbReference type="Gene3D" id="3.40.50.620">
    <property type="entry name" value="HUPs"/>
    <property type="match status" value="1"/>
</dbReference>
<dbReference type="HAMAP" id="MF_00344">
    <property type="entry name" value="GMP_synthase"/>
    <property type="match status" value="1"/>
</dbReference>
<dbReference type="InterPro" id="IPR029062">
    <property type="entry name" value="Class_I_gatase-like"/>
</dbReference>
<dbReference type="InterPro" id="IPR017926">
    <property type="entry name" value="GATASE"/>
</dbReference>
<dbReference type="InterPro" id="IPR001674">
    <property type="entry name" value="GMP_synth_C"/>
</dbReference>
<dbReference type="InterPro" id="IPR004739">
    <property type="entry name" value="GMP_synth_GATase"/>
</dbReference>
<dbReference type="InterPro" id="IPR022955">
    <property type="entry name" value="GMP_synthase"/>
</dbReference>
<dbReference type="InterPro" id="IPR025777">
    <property type="entry name" value="GMPS_ATP_PPase_dom"/>
</dbReference>
<dbReference type="InterPro" id="IPR022310">
    <property type="entry name" value="NAD/GMP_synthase"/>
</dbReference>
<dbReference type="InterPro" id="IPR014729">
    <property type="entry name" value="Rossmann-like_a/b/a_fold"/>
</dbReference>
<dbReference type="NCBIfam" id="TIGR00884">
    <property type="entry name" value="guaA_Cterm"/>
    <property type="match status" value="1"/>
</dbReference>
<dbReference type="NCBIfam" id="TIGR00888">
    <property type="entry name" value="guaA_Nterm"/>
    <property type="match status" value="1"/>
</dbReference>
<dbReference type="NCBIfam" id="NF000848">
    <property type="entry name" value="PRK00074.1"/>
    <property type="match status" value="1"/>
</dbReference>
<dbReference type="PANTHER" id="PTHR11922:SF2">
    <property type="entry name" value="GMP SYNTHASE [GLUTAMINE-HYDROLYZING]"/>
    <property type="match status" value="1"/>
</dbReference>
<dbReference type="PANTHER" id="PTHR11922">
    <property type="entry name" value="GMP SYNTHASE-RELATED"/>
    <property type="match status" value="1"/>
</dbReference>
<dbReference type="Pfam" id="PF00117">
    <property type="entry name" value="GATase"/>
    <property type="match status" value="1"/>
</dbReference>
<dbReference type="Pfam" id="PF00958">
    <property type="entry name" value="GMP_synt_C"/>
    <property type="match status" value="1"/>
</dbReference>
<dbReference type="Pfam" id="PF02540">
    <property type="entry name" value="NAD_synthase"/>
    <property type="match status" value="1"/>
</dbReference>
<dbReference type="PRINTS" id="PR00099">
    <property type="entry name" value="CPSGATASE"/>
</dbReference>
<dbReference type="PRINTS" id="PR00096">
    <property type="entry name" value="GATASE"/>
</dbReference>
<dbReference type="SUPFAM" id="SSF52402">
    <property type="entry name" value="Adenine nucleotide alpha hydrolases-like"/>
    <property type="match status" value="1"/>
</dbReference>
<dbReference type="SUPFAM" id="SSF52317">
    <property type="entry name" value="Class I glutamine amidotransferase-like"/>
    <property type="match status" value="1"/>
</dbReference>
<dbReference type="SUPFAM" id="SSF54810">
    <property type="entry name" value="GMP synthetase C-terminal dimerisation domain"/>
    <property type="match status" value="1"/>
</dbReference>
<dbReference type="PROSITE" id="PS51273">
    <property type="entry name" value="GATASE_TYPE_1"/>
    <property type="match status" value="1"/>
</dbReference>
<dbReference type="PROSITE" id="PS51553">
    <property type="entry name" value="GMPS_ATP_PPASE"/>
    <property type="match status" value="1"/>
</dbReference>
<comment type="function">
    <text evidence="1">Catalyzes the synthesis of GMP from XMP.</text>
</comment>
<comment type="catalytic activity">
    <reaction evidence="1">
        <text>XMP + L-glutamine + ATP + H2O = GMP + L-glutamate + AMP + diphosphate + 2 H(+)</text>
        <dbReference type="Rhea" id="RHEA:11680"/>
        <dbReference type="ChEBI" id="CHEBI:15377"/>
        <dbReference type="ChEBI" id="CHEBI:15378"/>
        <dbReference type="ChEBI" id="CHEBI:29985"/>
        <dbReference type="ChEBI" id="CHEBI:30616"/>
        <dbReference type="ChEBI" id="CHEBI:33019"/>
        <dbReference type="ChEBI" id="CHEBI:57464"/>
        <dbReference type="ChEBI" id="CHEBI:58115"/>
        <dbReference type="ChEBI" id="CHEBI:58359"/>
        <dbReference type="ChEBI" id="CHEBI:456215"/>
        <dbReference type="EC" id="6.3.5.2"/>
    </reaction>
</comment>
<comment type="pathway">
    <text evidence="1">Purine metabolism; GMP biosynthesis; GMP from XMP (L-Gln route): step 1/1.</text>
</comment>
<comment type="subunit">
    <text evidence="1">Homodimer.</text>
</comment>
<reference key="1">
    <citation type="journal article" date="2009" name="Genome Biol.">
        <title>Genomic and genetic analyses of diversity and plant interactions of Pseudomonas fluorescens.</title>
        <authorList>
            <person name="Silby M.W."/>
            <person name="Cerdeno-Tarraga A.M."/>
            <person name="Vernikos G.S."/>
            <person name="Giddens S.R."/>
            <person name="Jackson R.W."/>
            <person name="Preston G.M."/>
            <person name="Zhang X.-X."/>
            <person name="Moon C.D."/>
            <person name="Gehrig S.M."/>
            <person name="Godfrey S.A.C."/>
            <person name="Knight C.G."/>
            <person name="Malone J.G."/>
            <person name="Robinson Z."/>
            <person name="Spiers A.J."/>
            <person name="Harris S."/>
            <person name="Challis G.L."/>
            <person name="Yaxley A.M."/>
            <person name="Harris D."/>
            <person name="Seeger K."/>
            <person name="Murphy L."/>
            <person name="Rutter S."/>
            <person name="Squares R."/>
            <person name="Quail M.A."/>
            <person name="Saunders E."/>
            <person name="Mavromatis K."/>
            <person name="Brettin T.S."/>
            <person name="Bentley S.D."/>
            <person name="Hothersall J."/>
            <person name="Stephens E."/>
            <person name="Thomas C.M."/>
            <person name="Parkhill J."/>
            <person name="Levy S.B."/>
            <person name="Rainey P.B."/>
            <person name="Thomson N.R."/>
        </authorList>
    </citation>
    <scope>NUCLEOTIDE SEQUENCE [LARGE SCALE GENOMIC DNA]</scope>
    <source>
        <strain>SBW25</strain>
    </source>
</reference>
<name>GUAA_PSEFS</name>
<feature type="chain" id="PRO_1000205308" description="GMP synthase [glutamine-hydrolyzing]">
    <location>
        <begin position="1"/>
        <end position="525"/>
    </location>
</feature>
<feature type="domain" description="Glutamine amidotransferase type-1" evidence="1">
    <location>
        <begin position="9"/>
        <end position="207"/>
    </location>
</feature>
<feature type="domain" description="GMPS ATP-PPase" evidence="1">
    <location>
        <begin position="208"/>
        <end position="400"/>
    </location>
</feature>
<feature type="active site" description="Nucleophile" evidence="1">
    <location>
        <position position="86"/>
    </location>
</feature>
<feature type="active site" evidence="1">
    <location>
        <position position="181"/>
    </location>
</feature>
<feature type="active site" evidence="1">
    <location>
        <position position="183"/>
    </location>
</feature>
<feature type="binding site" evidence="1">
    <location>
        <begin position="235"/>
        <end position="241"/>
    </location>
    <ligand>
        <name>ATP</name>
        <dbReference type="ChEBI" id="CHEBI:30616"/>
    </ligand>
</feature>